<proteinExistence type="inferred from homology"/>
<reference key="1">
    <citation type="journal article" date="2003" name="Nature">
        <title>The DNA sequence of human chromosome 7.</title>
        <authorList>
            <person name="Hillier L.W."/>
            <person name="Fulton R.S."/>
            <person name="Fulton L.A."/>
            <person name="Graves T.A."/>
            <person name="Pepin K.H."/>
            <person name="Wagner-McPherson C."/>
            <person name="Layman D."/>
            <person name="Maas J."/>
            <person name="Jaeger S."/>
            <person name="Walker R."/>
            <person name="Wylie K."/>
            <person name="Sekhon M."/>
            <person name="Becker M.C."/>
            <person name="O'Laughlin M.D."/>
            <person name="Schaller M.E."/>
            <person name="Fewell G.A."/>
            <person name="Delehaunty K.D."/>
            <person name="Miner T.L."/>
            <person name="Nash W.E."/>
            <person name="Cordes M."/>
            <person name="Du H."/>
            <person name="Sun H."/>
            <person name="Edwards J."/>
            <person name="Bradshaw-Cordum H."/>
            <person name="Ali J."/>
            <person name="Andrews S."/>
            <person name="Isak A."/>
            <person name="Vanbrunt A."/>
            <person name="Nguyen C."/>
            <person name="Du F."/>
            <person name="Lamar B."/>
            <person name="Courtney L."/>
            <person name="Kalicki J."/>
            <person name="Ozersky P."/>
            <person name="Bielicki L."/>
            <person name="Scott K."/>
            <person name="Holmes A."/>
            <person name="Harkins R."/>
            <person name="Harris A."/>
            <person name="Strong C.M."/>
            <person name="Hou S."/>
            <person name="Tomlinson C."/>
            <person name="Dauphin-Kohlberg S."/>
            <person name="Kozlowicz-Reilly A."/>
            <person name="Leonard S."/>
            <person name="Rohlfing T."/>
            <person name="Rock S.M."/>
            <person name="Tin-Wollam A.-M."/>
            <person name="Abbott A."/>
            <person name="Minx P."/>
            <person name="Maupin R."/>
            <person name="Strowmatt C."/>
            <person name="Latreille P."/>
            <person name="Miller N."/>
            <person name="Johnson D."/>
            <person name="Murray J."/>
            <person name="Woessner J.P."/>
            <person name="Wendl M.C."/>
            <person name="Yang S.-P."/>
            <person name="Schultz B.R."/>
            <person name="Wallis J.W."/>
            <person name="Spieth J."/>
            <person name="Bieri T.A."/>
            <person name="Nelson J.O."/>
            <person name="Berkowicz N."/>
            <person name="Wohldmann P.E."/>
            <person name="Cook L.L."/>
            <person name="Hickenbotham M.T."/>
            <person name="Eldred J."/>
            <person name="Williams D."/>
            <person name="Bedell J.A."/>
            <person name="Mardis E.R."/>
            <person name="Clifton S.W."/>
            <person name="Chissoe S.L."/>
            <person name="Marra M.A."/>
            <person name="Raymond C."/>
            <person name="Haugen E."/>
            <person name="Gillett W."/>
            <person name="Zhou Y."/>
            <person name="James R."/>
            <person name="Phelps K."/>
            <person name="Iadanoto S."/>
            <person name="Bubb K."/>
            <person name="Simms E."/>
            <person name="Levy R."/>
            <person name="Clendenning J."/>
            <person name="Kaul R."/>
            <person name="Kent W.J."/>
            <person name="Furey T.S."/>
            <person name="Baertsch R.A."/>
            <person name="Brent M.R."/>
            <person name="Keibler E."/>
            <person name="Flicek P."/>
            <person name="Bork P."/>
            <person name="Suyama M."/>
            <person name="Bailey J.A."/>
            <person name="Portnoy M.E."/>
            <person name="Torrents D."/>
            <person name="Chinwalla A.T."/>
            <person name="Gish W.R."/>
            <person name="Eddy S.R."/>
            <person name="McPherson J.D."/>
            <person name="Olson M.V."/>
            <person name="Eichler E.E."/>
            <person name="Green E.D."/>
            <person name="Waterston R.H."/>
            <person name="Wilson R.K."/>
        </authorList>
    </citation>
    <scope>NUCLEOTIDE SEQUENCE [LARGE SCALE GENOMIC DNA]</scope>
</reference>
<name>SPD12_HUMAN</name>
<comment type="similarity">
    <text evidence="2">Belongs to the Speedy/Ringo family.</text>
</comment>
<organism>
    <name type="scientific">Homo sapiens</name>
    <name type="common">Human</name>
    <dbReference type="NCBI Taxonomy" id="9606"/>
    <lineage>
        <taxon>Eukaryota</taxon>
        <taxon>Metazoa</taxon>
        <taxon>Chordata</taxon>
        <taxon>Craniata</taxon>
        <taxon>Vertebrata</taxon>
        <taxon>Euteleostomi</taxon>
        <taxon>Mammalia</taxon>
        <taxon>Eutheria</taxon>
        <taxon>Euarchontoglires</taxon>
        <taxon>Primates</taxon>
        <taxon>Haplorrhini</taxon>
        <taxon>Catarrhini</taxon>
        <taxon>Hominidae</taxon>
        <taxon>Homo</taxon>
    </lineage>
</organism>
<sequence>MGQILGKIMMSHQPQPQEEQSPQRSTSGYPLQEVVDDEVSGPSAPGVDPSPPRRSLGWKRKRECLDESDDEPEKELAPEPEETWVAETLCGLKMKAKRRRVSLVLPEYYEAFNRLLEDPVIKRLLAWDKDLRVSDKYLLAMVIAYFSRAGLPSWQYQRIHFFLALYLANDMEEDDEAPKQNIFYFLYEETRSHIPLLRELWFQLCRYMNPRARKNCSQIALFRKYRFHFFCSMRCRAWVSLEELEEIQAYDPEHWVWARDRAHLS</sequence>
<dbReference type="EMBL" id="AC211424">
    <property type="status" value="NOT_ANNOTATED_CDS"/>
    <property type="molecule type" value="Genomic_DNA"/>
</dbReference>
<dbReference type="CCDS" id="CCDS94123.1"/>
<dbReference type="RefSeq" id="NP_001369484.1">
    <property type="nucleotide sequence ID" value="NM_001382555.2"/>
</dbReference>
<dbReference type="RefSeq" id="XP_047275634.1">
    <property type="nucleotide sequence ID" value="XM_047419678.1"/>
</dbReference>
<dbReference type="SMR" id="P0DUX1"/>
<dbReference type="Ensembl" id="ENST00000618416.5">
    <property type="protein sequence ID" value="ENSP00000510197.1"/>
    <property type="gene ID" value="ENSG00000184616.12"/>
</dbReference>
<dbReference type="GeneID" id="100101268"/>
<dbReference type="MANE-Select" id="ENST00000618416.5">
    <property type="protein sequence ID" value="ENSP00000510197.1"/>
    <property type="RefSeq nucleotide sequence ID" value="NM_001382555.2"/>
    <property type="RefSeq protein sequence ID" value="NP_001369484.1"/>
</dbReference>
<dbReference type="AGR" id="HGNC:51508"/>
<dbReference type="GeneCards" id="SPDYE12"/>
<dbReference type="HGNC" id="HGNC:51508">
    <property type="gene designation" value="SPDYE12"/>
</dbReference>
<dbReference type="HPA" id="ENSG00000184616">
    <property type="expression patterns" value="Tissue enhanced (skeletal muscle, testis)"/>
</dbReference>
<dbReference type="neXtProt" id="NX_P0DUX1"/>
<dbReference type="GeneTree" id="ENSGT00940000154173"/>
<dbReference type="InParanoid" id="P0DUX1"/>
<dbReference type="PRO" id="PR:P0DUX1"/>
<dbReference type="Proteomes" id="UP000005640">
    <property type="component" value="Chromosome 7"/>
</dbReference>
<dbReference type="GO" id="GO:0019901">
    <property type="term" value="F:protein kinase binding"/>
    <property type="evidence" value="ECO:0000318"/>
    <property type="project" value="GO_Central"/>
</dbReference>
<dbReference type="InterPro" id="IPR020984">
    <property type="entry name" value="Speedy"/>
</dbReference>
<dbReference type="PANTHER" id="PTHR31156">
    <property type="entry name" value="WBSCR19-LIKE PROTEIN"/>
    <property type="match status" value="1"/>
</dbReference>
<dbReference type="Pfam" id="PF11357">
    <property type="entry name" value="Spy1"/>
    <property type="match status" value="1"/>
</dbReference>
<protein>
    <recommendedName>
        <fullName evidence="2">Speedy protein E12</fullName>
    </recommendedName>
</protein>
<gene>
    <name evidence="3" type="primary">SPDYE12</name>
    <name evidence="3" type="synonym">SPDYE12P</name>
</gene>
<feature type="chain" id="PRO_0000453932" description="Speedy protein E12">
    <location>
        <begin position="1"/>
        <end position="265"/>
    </location>
</feature>
<feature type="region of interest" description="Disordered" evidence="1">
    <location>
        <begin position="1"/>
        <end position="80"/>
    </location>
</feature>
<feature type="compositionally biased region" description="Low complexity" evidence="1">
    <location>
        <begin position="13"/>
        <end position="23"/>
    </location>
</feature>
<feature type="compositionally biased region" description="Acidic residues" evidence="1">
    <location>
        <begin position="66"/>
        <end position="80"/>
    </location>
</feature>
<keyword id="KW-1185">Reference proteome</keyword>
<accession>P0DUX1</accession>
<evidence type="ECO:0000256" key="1">
    <source>
        <dbReference type="SAM" id="MobiDB-lite"/>
    </source>
</evidence>
<evidence type="ECO:0000305" key="2"/>
<evidence type="ECO:0000312" key="3">
    <source>
        <dbReference type="HGNC" id="HGNC:51508"/>
    </source>
</evidence>